<accession>A4FYN1</accession>
<proteinExistence type="inferred from homology"/>
<protein>
    <recommendedName>
        <fullName evidence="1">Fibrillarin-like rRNA/tRNA 2'-O-methyltransferase</fullName>
        <ecNumber evidence="1">2.1.1.-</ecNumber>
    </recommendedName>
</protein>
<gene>
    <name evidence="1" type="primary">flpA</name>
    <name type="ordered locus">MmarC5_1009</name>
</gene>
<organism>
    <name type="scientific">Methanococcus maripaludis (strain C5 / ATCC BAA-1333)</name>
    <dbReference type="NCBI Taxonomy" id="402880"/>
    <lineage>
        <taxon>Archaea</taxon>
        <taxon>Methanobacteriati</taxon>
        <taxon>Methanobacteriota</taxon>
        <taxon>Methanomada group</taxon>
        <taxon>Methanococci</taxon>
        <taxon>Methanococcales</taxon>
        <taxon>Methanococcaceae</taxon>
        <taxon>Methanococcus</taxon>
    </lineage>
</organism>
<dbReference type="EC" id="2.1.1.-" evidence="1"/>
<dbReference type="EMBL" id="CP000609">
    <property type="protein sequence ID" value="ABO35315.1"/>
    <property type="molecule type" value="Genomic_DNA"/>
</dbReference>
<dbReference type="RefSeq" id="WP_011868768.1">
    <property type="nucleotide sequence ID" value="NC_009135.1"/>
</dbReference>
<dbReference type="SMR" id="A4FYN1"/>
<dbReference type="STRING" id="402880.MmarC5_1009"/>
<dbReference type="GeneID" id="4928249"/>
<dbReference type="KEGG" id="mmq:MmarC5_1009"/>
<dbReference type="eggNOG" id="arCOG00078">
    <property type="taxonomic scope" value="Archaea"/>
</dbReference>
<dbReference type="HOGENOM" id="CLU_059055_2_0_2"/>
<dbReference type="OrthoDB" id="6244at2157"/>
<dbReference type="Proteomes" id="UP000000253">
    <property type="component" value="Chromosome"/>
</dbReference>
<dbReference type="GO" id="GO:1990259">
    <property type="term" value="F:histone H2AQ104 methyltransferase activity"/>
    <property type="evidence" value="ECO:0007669"/>
    <property type="project" value="TreeGrafter"/>
</dbReference>
<dbReference type="GO" id="GO:0003723">
    <property type="term" value="F:RNA binding"/>
    <property type="evidence" value="ECO:0007669"/>
    <property type="project" value="UniProtKB-UniRule"/>
</dbReference>
<dbReference type="GO" id="GO:0008649">
    <property type="term" value="F:rRNA methyltransferase activity"/>
    <property type="evidence" value="ECO:0007669"/>
    <property type="project" value="TreeGrafter"/>
</dbReference>
<dbReference type="GO" id="GO:0000494">
    <property type="term" value="P:box C/D sno(s)RNA 3'-end processing"/>
    <property type="evidence" value="ECO:0007669"/>
    <property type="project" value="TreeGrafter"/>
</dbReference>
<dbReference type="GO" id="GO:0008033">
    <property type="term" value="P:tRNA processing"/>
    <property type="evidence" value="ECO:0007669"/>
    <property type="project" value="UniProtKB-UniRule"/>
</dbReference>
<dbReference type="CDD" id="cd02440">
    <property type="entry name" value="AdoMet_MTases"/>
    <property type="match status" value="1"/>
</dbReference>
<dbReference type="Gene3D" id="3.30.200.20">
    <property type="entry name" value="Phosphorylase Kinase, domain 1"/>
    <property type="match status" value="1"/>
</dbReference>
<dbReference type="Gene3D" id="3.40.50.150">
    <property type="entry name" value="Vaccinia Virus protein VP39"/>
    <property type="match status" value="1"/>
</dbReference>
<dbReference type="HAMAP" id="MF_00351">
    <property type="entry name" value="RNA_methyltransf_FlpA"/>
    <property type="match status" value="1"/>
</dbReference>
<dbReference type="InterPro" id="IPR000692">
    <property type="entry name" value="Fibrillarin"/>
</dbReference>
<dbReference type="InterPro" id="IPR020813">
    <property type="entry name" value="Fibrillarin_CS"/>
</dbReference>
<dbReference type="InterPro" id="IPR029063">
    <property type="entry name" value="SAM-dependent_MTases_sf"/>
</dbReference>
<dbReference type="NCBIfam" id="NF003276">
    <property type="entry name" value="PRK04266.1-2"/>
    <property type="match status" value="1"/>
</dbReference>
<dbReference type="NCBIfam" id="NF003277">
    <property type="entry name" value="PRK04266.1-3"/>
    <property type="match status" value="1"/>
</dbReference>
<dbReference type="NCBIfam" id="NF003279">
    <property type="entry name" value="PRK04266.1-5"/>
    <property type="match status" value="1"/>
</dbReference>
<dbReference type="PANTHER" id="PTHR10335:SF17">
    <property type="entry name" value="FIBRILLARIN"/>
    <property type="match status" value="1"/>
</dbReference>
<dbReference type="PANTHER" id="PTHR10335">
    <property type="entry name" value="RRNA 2-O-METHYLTRANSFERASE FIBRILLARIN"/>
    <property type="match status" value="1"/>
</dbReference>
<dbReference type="Pfam" id="PF01269">
    <property type="entry name" value="Fibrillarin"/>
    <property type="match status" value="1"/>
</dbReference>
<dbReference type="PIRSF" id="PIRSF006540">
    <property type="entry name" value="Nop17p"/>
    <property type="match status" value="1"/>
</dbReference>
<dbReference type="PRINTS" id="PR00052">
    <property type="entry name" value="FIBRILLARIN"/>
</dbReference>
<dbReference type="SMART" id="SM01206">
    <property type="entry name" value="Fibrillarin"/>
    <property type="match status" value="1"/>
</dbReference>
<dbReference type="SUPFAM" id="SSF53335">
    <property type="entry name" value="S-adenosyl-L-methionine-dependent methyltransferases"/>
    <property type="match status" value="1"/>
</dbReference>
<dbReference type="PROSITE" id="PS00566">
    <property type="entry name" value="FIBRILLARIN"/>
    <property type="match status" value="1"/>
</dbReference>
<sequence length="230" mass="25996">MEKIKVKEIFNNVYSVDFGDGLKRIATKSLIPGKRVYGEKLVYSDNIEYRVWNPNKSKLGAAIINGLKKMPIKKGTKVLYLGASAGTTPSHVADIAENSLVYALEFAPRIMREFIDSCNERKNLIPVLGDANRPQDYSNIVEKVDVIFEDVAQPNQAEILVKNAKWFLKENGYAMISIKARSVDVTKNPREIFAEQKKILIEGGFEIVDEVNIEPFEKDHMMMVGIWKGN</sequence>
<keyword id="KW-0489">Methyltransferase</keyword>
<keyword id="KW-0694">RNA-binding</keyword>
<keyword id="KW-0698">rRNA processing</keyword>
<keyword id="KW-0808">Transferase</keyword>
<keyword id="KW-0819">tRNA processing</keyword>
<feature type="chain" id="PRO_1000006939" description="Fibrillarin-like rRNA/tRNA 2'-O-methyltransferase">
    <location>
        <begin position="1"/>
        <end position="230"/>
    </location>
</feature>
<feature type="binding site" evidence="1">
    <location>
        <begin position="87"/>
        <end position="88"/>
    </location>
    <ligand>
        <name>S-adenosyl-L-methionine</name>
        <dbReference type="ChEBI" id="CHEBI:59789"/>
    </ligand>
</feature>
<feature type="binding site" evidence="1">
    <location>
        <begin position="105"/>
        <end position="106"/>
    </location>
    <ligand>
        <name>S-adenosyl-L-methionine</name>
        <dbReference type="ChEBI" id="CHEBI:59789"/>
    </ligand>
</feature>
<feature type="binding site" evidence="1">
    <location>
        <begin position="130"/>
        <end position="131"/>
    </location>
    <ligand>
        <name>S-adenosyl-L-methionine</name>
        <dbReference type="ChEBI" id="CHEBI:59789"/>
    </ligand>
</feature>
<feature type="binding site" evidence="1">
    <location>
        <begin position="150"/>
        <end position="153"/>
    </location>
    <ligand>
        <name>S-adenosyl-L-methionine</name>
        <dbReference type="ChEBI" id="CHEBI:59789"/>
    </ligand>
</feature>
<evidence type="ECO:0000255" key="1">
    <source>
        <dbReference type="HAMAP-Rule" id="MF_00351"/>
    </source>
</evidence>
<reference key="1">
    <citation type="submission" date="2007-03" db="EMBL/GenBank/DDBJ databases">
        <title>Complete sequence of chromosome of Methanococcus maripaludis C5.</title>
        <authorList>
            <consortium name="US DOE Joint Genome Institute"/>
            <person name="Copeland A."/>
            <person name="Lucas S."/>
            <person name="Lapidus A."/>
            <person name="Barry K."/>
            <person name="Glavina del Rio T."/>
            <person name="Dalin E."/>
            <person name="Tice H."/>
            <person name="Pitluck S."/>
            <person name="Chertkov O."/>
            <person name="Brettin T."/>
            <person name="Bruce D."/>
            <person name="Han C."/>
            <person name="Detter J.C."/>
            <person name="Schmutz J."/>
            <person name="Larimer F."/>
            <person name="Land M."/>
            <person name="Hauser L."/>
            <person name="Kyrpides N."/>
            <person name="Mikhailova N."/>
            <person name="Sieprawska-Lupa M."/>
            <person name="Whitman W.B."/>
            <person name="Richardson P."/>
        </authorList>
    </citation>
    <scope>NUCLEOTIDE SEQUENCE [LARGE SCALE GENOMIC DNA]</scope>
    <source>
        <strain>C5 / ATCC BAA-1333</strain>
    </source>
</reference>
<name>FLPA_METM5</name>
<comment type="function">
    <text evidence="1">Involved in pre-rRNA and tRNA processing. Utilizes the methyl donor S-adenosyl-L-methionine to catalyze the site-specific 2'-hydroxyl methylation of ribose moieties in rRNA and tRNA. Site specificity is provided by a guide RNA that base pairs with the substrate. Methylation occurs at a characteristic distance from the sequence involved in base pairing with the guide RNA.</text>
</comment>
<comment type="subunit">
    <text evidence="1">Interacts with nop5. Component of box C/D small ribonucleoprotein (sRNP) particles that contain rpl7ae, FlpA and nop5, plus a guide RNA.</text>
</comment>
<comment type="similarity">
    <text evidence="1">Belongs to the methyltransferase superfamily. Fibrillarin family.</text>
</comment>